<organism>
    <name type="scientific">Chloroflexus aggregans (strain MD-66 / DSM 9485)</name>
    <dbReference type="NCBI Taxonomy" id="326427"/>
    <lineage>
        <taxon>Bacteria</taxon>
        <taxon>Bacillati</taxon>
        <taxon>Chloroflexota</taxon>
        <taxon>Chloroflexia</taxon>
        <taxon>Chloroflexales</taxon>
        <taxon>Chloroflexineae</taxon>
        <taxon>Chloroflexaceae</taxon>
        <taxon>Chloroflexus</taxon>
    </lineage>
</organism>
<name>RL33_CHLAD</name>
<proteinExistence type="inferred from homology"/>
<evidence type="ECO:0000255" key="1">
    <source>
        <dbReference type="HAMAP-Rule" id="MF_00294"/>
    </source>
</evidence>
<evidence type="ECO:0000305" key="2"/>
<comment type="similarity">
    <text evidence="1">Belongs to the bacterial ribosomal protein bL33 family.</text>
</comment>
<gene>
    <name evidence="1" type="primary">rpmG</name>
    <name type="ordered locus">Cagg_3241</name>
</gene>
<protein>
    <recommendedName>
        <fullName evidence="1">Large ribosomal subunit protein bL33</fullName>
    </recommendedName>
    <alternativeName>
        <fullName evidence="2">50S ribosomal protein L33</fullName>
    </alternativeName>
</protein>
<reference key="1">
    <citation type="submission" date="2008-12" db="EMBL/GenBank/DDBJ databases">
        <title>Complete sequence of Chloroflexus aggregans DSM 9485.</title>
        <authorList>
            <consortium name="US DOE Joint Genome Institute"/>
            <person name="Lucas S."/>
            <person name="Copeland A."/>
            <person name="Lapidus A."/>
            <person name="Glavina del Rio T."/>
            <person name="Dalin E."/>
            <person name="Tice H."/>
            <person name="Pitluck S."/>
            <person name="Foster B."/>
            <person name="Larimer F."/>
            <person name="Land M."/>
            <person name="Hauser L."/>
            <person name="Kyrpides N."/>
            <person name="Mikhailova N."/>
            <person name="Bryant D.A."/>
            <person name="Richardson P."/>
        </authorList>
    </citation>
    <scope>NUCLEOTIDE SEQUENCE [LARGE SCALE GENOMIC DNA]</scope>
    <source>
        <strain>MD-66 / DSM 9485</strain>
    </source>
</reference>
<sequence length="54" mass="6498">MASKKGNRIVIKLKSTESGHTYTTEKNRRNDPNRLELRKYDPIVRRHVLYRETK</sequence>
<feature type="chain" id="PRO_1000194050" description="Large ribosomal subunit protein bL33">
    <location>
        <begin position="1"/>
        <end position="54"/>
    </location>
</feature>
<keyword id="KW-0687">Ribonucleoprotein</keyword>
<keyword id="KW-0689">Ribosomal protein</keyword>
<dbReference type="EMBL" id="CP001337">
    <property type="protein sequence ID" value="ACL26099.1"/>
    <property type="molecule type" value="Genomic_DNA"/>
</dbReference>
<dbReference type="RefSeq" id="WP_015941946.1">
    <property type="nucleotide sequence ID" value="NC_011831.1"/>
</dbReference>
<dbReference type="STRING" id="326427.Cagg_3241"/>
<dbReference type="KEGG" id="cag:Cagg_3241"/>
<dbReference type="eggNOG" id="COG0267">
    <property type="taxonomic scope" value="Bacteria"/>
</dbReference>
<dbReference type="HOGENOM" id="CLU_190949_3_0_0"/>
<dbReference type="OrthoDB" id="9801333at2"/>
<dbReference type="Proteomes" id="UP000002508">
    <property type="component" value="Chromosome"/>
</dbReference>
<dbReference type="GO" id="GO:0022625">
    <property type="term" value="C:cytosolic large ribosomal subunit"/>
    <property type="evidence" value="ECO:0007669"/>
    <property type="project" value="TreeGrafter"/>
</dbReference>
<dbReference type="GO" id="GO:0003735">
    <property type="term" value="F:structural constituent of ribosome"/>
    <property type="evidence" value="ECO:0007669"/>
    <property type="project" value="InterPro"/>
</dbReference>
<dbReference type="GO" id="GO:0006412">
    <property type="term" value="P:translation"/>
    <property type="evidence" value="ECO:0007669"/>
    <property type="project" value="UniProtKB-UniRule"/>
</dbReference>
<dbReference type="FunFam" id="2.20.28.120:FF:000012">
    <property type="entry name" value="50S ribosomal protein L33"/>
    <property type="match status" value="1"/>
</dbReference>
<dbReference type="Gene3D" id="2.20.28.120">
    <property type="entry name" value="Ribosomal protein L33"/>
    <property type="match status" value="1"/>
</dbReference>
<dbReference type="HAMAP" id="MF_00294">
    <property type="entry name" value="Ribosomal_bL33"/>
    <property type="match status" value="1"/>
</dbReference>
<dbReference type="InterPro" id="IPR001705">
    <property type="entry name" value="Ribosomal_bL33"/>
</dbReference>
<dbReference type="InterPro" id="IPR018264">
    <property type="entry name" value="Ribosomal_bL33_CS"/>
</dbReference>
<dbReference type="InterPro" id="IPR038584">
    <property type="entry name" value="Ribosomal_bL33_sf"/>
</dbReference>
<dbReference type="InterPro" id="IPR011332">
    <property type="entry name" value="Ribosomal_zn-bd"/>
</dbReference>
<dbReference type="NCBIfam" id="NF001860">
    <property type="entry name" value="PRK00595.1"/>
    <property type="match status" value="1"/>
</dbReference>
<dbReference type="NCBIfam" id="TIGR01023">
    <property type="entry name" value="rpmG_bact"/>
    <property type="match status" value="1"/>
</dbReference>
<dbReference type="PANTHER" id="PTHR15238">
    <property type="entry name" value="54S RIBOSOMAL PROTEIN L39, MITOCHONDRIAL"/>
    <property type="match status" value="1"/>
</dbReference>
<dbReference type="PANTHER" id="PTHR15238:SF1">
    <property type="entry name" value="LARGE RIBOSOMAL SUBUNIT PROTEIN BL33M"/>
    <property type="match status" value="1"/>
</dbReference>
<dbReference type="Pfam" id="PF00471">
    <property type="entry name" value="Ribosomal_L33"/>
    <property type="match status" value="1"/>
</dbReference>
<dbReference type="SUPFAM" id="SSF57829">
    <property type="entry name" value="Zn-binding ribosomal proteins"/>
    <property type="match status" value="1"/>
</dbReference>
<dbReference type="PROSITE" id="PS00582">
    <property type="entry name" value="RIBOSOMAL_L33"/>
    <property type="match status" value="1"/>
</dbReference>
<accession>B8G845</accession>